<gene>
    <name type="primary">cog6</name>
    <name type="ORF">NFIA_058440</name>
</gene>
<comment type="function">
    <text evidence="1">Acts as a component of the peripheral membrane COG complex that is involved in intra-Golgi protein trafficking. COG is located at the cis-Golgi, and regulates tethering of retrograde intra-Golgi vesicles and possibly a number of other membrane trafficking events (By similarity).</text>
</comment>
<comment type="subcellular location">
    <subcellularLocation>
        <location evidence="1">Golgi apparatus membrane</location>
        <topology evidence="1">Peripheral membrane protein</topology>
    </subcellularLocation>
</comment>
<comment type="similarity">
    <text evidence="3">Belongs to the COG6 family.</text>
</comment>
<evidence type="ECO:0000250" key="1"/>
<evidence type="ECO:0000256" key="2">
    <source>
        <dbReference type="SAM" id="MobiDB-lite"/>
    </source>
</evidence>
<evidence type="ECO:0000305" key="3"/>
<proteinExistence type="inferred from homology"/>
<organism>
    <name type="scientific">Neosartorya fischeri (strain ATCC 1020 / DSM 3700 / CBS 544.65 / FGSC A1164 / JCM 1740 / NRRL 181 / WB 181)</name>
    <name type="common">Aspergillus fischerianus</name>
    <dbReference type="NCBI Taxonomy" id="331117"/>
    <lineage>
        <taxon>Eukaryota</taxon>
        <taxon>Fungi</taxon>
        <taxon>Dikarya</taxon>
        <taxon>Ascomycota</taxon>
        <taxon>Pezizomycotina</taxon>
        <taxon>Eurotiomycetes</taxon>
        <taxon>Eurotiomycetidae</taxon>
        <taxon>Eurotiales</taxon>
        <taxon>Aspergillaceae</taxon>
        <taxon>Aspergillus</taxon>
        <taxon>Aspergillus subgen. Fumigati</taxon>
    </lineage>
</organism>
<name>COG6_NEOFI</name>
<keyword id="KW-0333">Golgi apparatus</keyword>
<keyword id="KW-0472">Membrane</keyword>
<keyword id="KW-0653">Protein transport</keyword>
<keyword id="KW-1185">Reference proteome</keyword>
<keyword id="KW-0813">Transport</keyword>
<accession>A1DNX2</accession>
<feature type="chain" id="PRO_0000339325" description="Conserved oligomeric Golgi complex subunit 6">
    <location>
        <begin position="1"/>
        <end position="731"/>
    </location>
</feature>
<feature type="region of interest" description="Disordered" evidence="2">
    <location>
        <begin position="1"/>
        <end position="36"/>
    </location>
</feature>
<feature type="region of interest" description="Disordered" evidence="2">
    <location>
        <begin position="578"/>
        <end position="599"/>
    </location>
</feature>
<feature type="region of interest" description="Disordered" evidence="2">
    <location>
        <begin position="686"/>
        <end position="714"/>
    </location>
</feature>
<feature type="compositionally biased region" description="Acidic residues" evidence="2">
    <location>
        <begin position="689"/>
        <end position="699"/>
    </location>
</feature>
<reference key="1">
    <citation type="journal article" date="2008" name="PLoS Genet.">
        <title>Genomic islands in the pathogenic filamentous fungus Aspergillus fumigatus.</title>
        <authorList>
            <person name="Fedorova N.D."/>
            <person name="Khaldi N."/>
            <person name="Joardar V.S."/>
            <person name="Maiti R."/>
            <person name="Amedeo P."/>
            <person name="Anderson M.J."/>
            <person name="Crabtree J."/>
            <person name="Silva J.C."/>
            <person name="Badger J.H."/>
            <person name="Albarraq A."/>
            <person name="Angiuoli S."/>
            <person name="Bussey H."/>
            <person name="Bowyer P."/>
            <person name="Cotty P.J."/>
            <person name="Dyer P.S."/>
            <person name="Egan A."/>
            <person name="Galens K."/>
            <person name="Fraser-Liggett C.M."/>
            <person name="Haas B.J."/>
            <person name="Inman J.M."/>
            <person name="Kent R."/>
            <person name="Lemieux S."/>
            <person name="Malavazi I."/>
            <person name="Orvis J."/>
            <person name="Roemer T."/>
            <person name="Ronning C.M."/>
            <person name="Sundaram J.P."/>
            <person name="Sutton G."/>
            <person name="Turner G."/>
            <person name="Venter J.C."/>
            <person name="White O.R."/>
            <person name="Whitty B.R."/>
            <person name="Youngman P."/>
            <person name="Wolfe K.H."/>
            <person name="Goldman G.H."/>
            <person name="Wortman J.R."/>
            <person name="Jiang B."/>
            <person name="Denning D.W."/>
            <person name="Nierman W.C."/>
        </authorList>
    </citation>
    <scope>NUCLEOTIDE SEQUENCE [LARGE SCALE GENOMIC DNA]</scope>
    <source>
        <strain>ATCC 1020 / DSM 3700 / CBS 544.65 / FGSC A1164 / JCM 1740 / NRRL 181 / WB 181</strain>
    </source>
</reference>
<protein>
    <recommendedName>
        <fullName>Conserved oligomeric Golgi complex subunit 6</fullName>
        <shortName>COG complex subunit 6</shortName>
    </recommendedName>
    <alternativeName>
        <fullName>Component of oligomeric Golgi complex 6</fullName>
    </alternativeName>
</protein>
<dbReference type="EMBL" id="DS027698">
    <property type="protein sequence ID" value="EAW16493.1"/>
    <property type="molecule type" value="Genomic_DNA"/>
</dbReference>
<dbReference type="RefSeq" id="XP_001258390.1">
    <property type="nucleotide sequence ID" value="XM_001258389.1"/>
</dbReference>
<dbReference type="SMR" id="A1DNX2"/>
<dbReference type="STRING" id="331117.A1DNX2"/>
<dbReference type="EnsemblFungi" id="EAW16493">
    <property type="protein sequence ID" value="EAW16493"/>
    <property type="gene ID" value="NFIA_058440"/>
</dbReference>
<dbReference type="GeneID" id="4584906"/>
<dbReference type="KEGG" id="nfi:NFIA_058440"/>
<dbReference type="VEuPathDB" id="FungiDB:NFIA_058440"/>
<dbReference type="eggNOG" id="KOG3758">
    <property type="taxonomic scope" value="Eukaryota"/>
</dbReference>
<dbReference type="HOGENOM" id="CLU_011361_1_0_1"/>
<dbReference type="OMA" id="HSCLDFF"/>
<dbReference type="OrthoDB" id="272987at2759"/>
<dbReference type="Proteomes" id="UP000006702">
    <property type="component" value="Unassembled WGS sequence"/>
</dbReference>
<dbReference type="GO" id="GO:0000139">
    <property type="term" value="C:Golgi membrane"/>
    <property type="evidence" value="ECO:0007669"/>
    <property type="project" value="UniProtKB-SubCell"/>
</dbReference>
<dbReference type="GO" id="GO:0017119">
    <property type="term" value="C:Golgi transport complex"/>
    <property type="evidence" value="ECO:0007669"/>
    <property type="project" value="InterPro"/>
</dbReference>
<dbReference type="GO" id="GO:0006891">
    <property type="term" value="P:intra-Golgi vesicle-mediated transport"/>
    <property type="evidence" value="ECO:0007669"/>
    <property type="project" value="InterPro"/>
</dbReference>
<dbReference type="GO" id="GO:0015031">
    <property type="term" value="P:protein transport"/>
    <property type="evidence" value="ECO:0007669"/>
    <property type="project" value="UniProtKB-KW"/>
</dbReference>
<dbReference type="InterPro" id="IPR010490">
    <property type="entry name" value="COG6"/>
</dbReference>
<dbReference type="InterPro" id="IPR048369">
    <property type="entry name" value="COG6_C"/>
</dbReference>
<dbReference type="InterPro" id="IPR048368">
    <property type="entry name" value="COG6_N"/>
</dbReference>
<dbReference type="PANTHER" id="PTHR21506">
    <property type="entry name" value="COMPONENT OF OLIGOMERIC GOLGI COMPLEX 6"/>
    <property type="match status" value="1"/>
</dbReference>
<dbReference type="PANTHER" id="PTHR21506:SF0">
    <property type="entry name" value="CONSERVED OLIGOMERIC GOLGI COMPLEX SUBUNIT 6"/>
    <property type="match status" value="1"/>
</dbReference>
<dbReference type="Pfam" id="PF20653">
    <property type="entry name" value="COG6_C"/>
    <property type="match status" value="1"/>
</dbReference>
<dbReference type="Pfam" id="PF06419">
    <property type="entry name" value="COG6_N"/>
    <property type="match status" value="1"/>
</dbReference>
<dbReference type="SMART" id="SM01087">
    <property type="entry name" value="COG6"/>
    <property type="match status" value="1"/>
</dbReference>
<sequence length="731" mass="80644">MESYFPPGATANHSSIRTSSPASTPLSPPTQRSNALSNRLTSVLSASYADSDIRDALETLSLRGVHNTAETRRQLRLDVQKEVVECNAEIVRDFGKVAEHIVRAKQDTAPVIEEASALMNQKKESETKQQLLDAFVKHFVVSDDDLLVLTSAEEPIDDRFFDVLDRVKQVHHDCEVLLGGENQRLGLELMEKSSRNLNSAYQKLFRWIQKEFKSLNLEDPRISSSIRRALRVLAERPSLFHSCLDFFADARDYALSDAFHYALTDAVSGSGGDRNVKPIEFSAHDPLRYVGDMLAWVHSTTVSEREALEALFVADGEEIAKGIQAGLSSEPWSRIDEGEEVSFDGQKALSDLVNRDLVGVSRALRQRVELVIQGHDEPVTCYKVVHLLSFYRATFSRLLGTKSNLADMMQTLENFTFARFESIMREQVNVLSNDHAALTPPDDLSAPEFFLDALEELTSLMKTHDASLGAEDAESESTADNKFTPVLRVAFDPFLQLAKSSAAELPDATARAIYTTNVLLTARSTISAFPFASATHLNPISTALSSLRMELLEIQHRYLLDASGLGVLLAALESFSPSPTTSKPESEGKDGHAPPQADRQPTDIAEIADLPAFQQEALIAVSQQLDDFLPSALMDATDNLKHLQSASFVQSVTEEAVEAFCRDFEFVEGMIIGADEARGRVHIKRTEDGSDAGVEDDVVTESGKVPDGDEQESGLRRLFPRTTGEIRVLLS</sequence>